<evidence type="ECO:0000255" key="1">
    <source>
        <dbReference type="PROSITE-ProRule" id="PRU00345"/>
    </source>
</evidence>
<evidence type="ECO:0000269" key="2">
    <source>
    </source>
</evidence>
<evidence type="ECO:0000269" key="3">
    <source ref="3"/>
</evidence>
<evidence type="ECO:0000303" key="4">
    <source>
    </source>
</evidence>
<evidence type="ECO:0000305" key="5"/>
<evidence type="ECO:0007744" key="6">
    <source>
        <dbReference type="PDB" id="1S3J"/>
    </source>
</evidence>
<evidence type="ECO:0007829" key="7">
    <source>
        <dbReference type="PDB" id="1S3J"/>
    </source>
</evidence>
<keyword id="KW-0002">3D-structure</keyword>
<keyword id="KW-0963">Cytoplasm</keyword>
<keyword id="KW-0238">DNA-binding</keyword>
<keyword id="KW-1185">Reference proteome</keyword>
<keyword id="KW-0678">Repressor</keyword>
<keyword id="KW-0804">Transcription</keyword>
<keyword id="KW-0805">Transcription regulation</keyword>
<proteinExistence type="evidence at protein level"/>
<dbReference type="EMBL" id="AL009126">
    <property type="protein sequence ID" value="CAB15276.1"/>
    <property type="molecule type" value="Genomic_DNA"/>
</dbReference>
<dbReference type="PIR" id="H70021">
    <property type="entry name" value="H70021"/>
</dbReference>
<dbReference type="RefSeq" id="NP_391166.1">
    <property type="nucleotide sequence ID" value="NC_000964.3"/>
</dbReference>
<dbReference type="RefSeq" id="WP_003242592.1">
    <property type="nucleotide sequence ID" value="NZ_OZ025638.1"/>
</dbReference>
<dbReference type="PDB" id="1S3J">
    <property type="method" value="X-ray"/>
    <property type="resolution" value="2.25 A"/>
    <property type="chains" value="A/B=1-155"/>
</dbReference>
<dbReference type="PDBsum" id="1S3J"/>
<dbReference type="SMR" id="O32181"/>
<dbReference type="FunCoup" id="O32181">
    <property type="interactions" value="25"/>
</dbReference>
<dbReference type="STRING" id="224308.BSU32870"/>
<dbReference type="PaxDb" id="224308-BSU32870"/>
<dbReference type="EnsemblBacteria" id="CAB15276">
    <property type="protein sequence ID" value="CAB15276"/>
    <property type="gene ID" value="BSU_32870"/>
</dbReference>
<dbReference type="GeneID" id="935923"/>
<dbReference type="KEGG" id="bsu:BSU32870"/>
<dbReference type="PATRIC" id="fig|224308.179.peg.3563"/>
<dbReference type="eggNOG" id="COG1846">
    <property type="taxonomic scope" value="Bacteria"/>
</dbReference>
<dbReference type="InParanoid" id="O32181"/>
<dbReference type="OrthoDB" id="327696at2"/>
<dbReference type="PhylomeDB" id="O32181"/>
<dbReference type="BioCyc" id="BSUB:BSU32870-MONOMER"/>
<dbReference type="EvolutionaryTrace" id="O32181"/>
<dbReference type="Proteomes" id="UP000001570">
    <property type="component" value="Chromosome"/>
</dbReference>
<dbReference type="GO" id="GO:0005737">
    <property type="term" value="C:cytoplasm"/>
    <property type="evidence" value="ECO:0007669"/>
    <property type="project" value="UniProtKB-SubCell"/>
</dbReference>
<dbReference type="GO" id="GO:0003677">
    <property type="term" value="F:DNA binding"/>
    <property type="evidence" value="ECO:0007669"/>
    <property type="project" value="UniProtKB-KW"/>
</dbReference>
<dbReference type="GO" id="GO:0003700">
    <property type="term" value="F:DNA-binding transcription factor activity"/>
    <property type="evidence" value="ECO:0007669"/>
    <property type="project" value="InterPro"/>
</dbReference>
<dbReference type="GO" id="GO:0006355">
    <property type="term" value="P:regulation of DNA-templated transcription"/>
    <property type="evidence" value="ECO:0000318"/>
    <property type="project" value="GO_Central"/>
</dbReference>
<dbReference type="GO" id="GO:0006950">
    <property type="term" value="P:response to stress"/>
    <property type="evidence" value="ECO:0000318"/>
    <property type="project" value="GO_Central"/>
</dbReference>
<dbReference type="Gene3D" id="1.10.287.100">
    <property type="match status" value="1"/>
</dbReference>
<dbReference type="Gene3D" id="1.20.5.420">
    <property type="entry name" value="Immunoglobulin FC, subunit C"/>
    <property type="match status" value="1"/>
</dbReference>
<dbReference type="Gene3D" id="1.10.10.10">
    <property type="entry name" value="Winged helix-like DNA-binding domain superfamily/Winged helix DNA-binding domain"/>
    <property type="match status" value="1"/>
</dbReference>
<dbReference type="InterPro" id="IPR000835">
    <property type="entry name" value="HTH_MarR-typ"/>
</dbReference>
<dbReference type="InterPro" id="IPR036388">
    <property type="entry name" value="WH-like_DNA-bd_sf"/>
</dbReference>
<dbReference type="InterPro" id="IPR036390">
    <property type="entry name" value="WH_DNA-bd_sf"/>
</dbReference>
<dbReference type="PANTHER" id="PTHR42756">
    <property type="entry name" value="TRANSCRIPTIONAL REGULATOR, MARR"/>
    <property type="match status" value="1"/>
</dbReference>
<dbReference type="PANTHER" id="PTHR42756:SF1">
    <property type="entry name" value="TRANSCRIPTIONAL REPRESSOR OF EMRAB OPERON"/>
    <property type="match status" value="1"/>
</dbReference>
<dbReference type="Pfam" id="PF01047">
    <property type="entry name" value="MarR"/>
    <property type="match status" value="1"/>
</dbReference>
<dbReference type="PRINTS" id="PR00598">
    <property type="entry name" value="HTHMARR"/>
</dbReference>
<dbReference type="SMART" id="SM00347">
    <property type="entry name" value="HTH_MARR"/>
    <property type="match status" value="1"/>
</dbReference>
<dbReference type="SUPFAM" id="SSF46785">
    <property type="entry name" value="Winged helix' DNA-binding domain"/>
    <property type="match status" value="1"/>
</dbReference>
<dbReference type="PROSITE" id="PS50995">
    <property type="entry name" value="HTH_MARR_2"/>
    <property type="match status" value="1"/>
</dbReference>
<feature type="chain" id="PRO_0000360555" description="HTH-type transcriptional repressor MdtR">
    <location>
        <begin position="1"/>
        <end position="155"/>
    </location>
</feature>
<feature type="domain" description="HTH marR-type" evidence="1">
    <location>
        <begin position="4"/>
        <end position="140"/>
    </location>
</feature>
<feature type="DNA-binding region" description="H-T-H motif" evidence="1">
    <location>
        <begin position="54"/>
        <end position="77"/>
    </location>
</feature>
<feature type="mutagenesis site" description="Significantly reduces binding affinity to DNA, resulting in derepression of mdtRP transcription." evidence="2">
    <original>A</original>
    <variation>T</variation>
    <location>
        <position position="67"/>
    </location>
</feature>
<feature type="mutagenesis site" description="Significantly reduces binding affinity to DNA, resulting in derepression of mdtRP transcription." evidence="2">
    <original>R</original>
    <variation>K</variation>
    <location>
        <position position="83"/>
    </location>
</feature>
<feature type="helix" evidence="7">
    <location>
        <begin position="4"/>
        <end position="32"/>
    </location>
</feature>
<feature type="helix" evidence="7">
    <location>
        <begin position="37"/>
        <end position="49"/>
    </location>
</feature>
<feature type="strand" evidence="7">
    <location>
        <begin position="50"/>
        <end position="53"/>
    </location>
</feature>
<feature type="helix" evidence="7">
    <location>
        <begin position="54"/>
        <end position="61"/>
    </location>
</feature>
<feature type="helix" evidence="7">
    <location>
        <begin position="65"/>
        <end position="77"/>
    </location>
</feature>
<feature type="strand" evidence="7">
    <location>
        <begin position="80"/>
        <end position="85"/>
    </location>
</feature>
<feature type="strand" evidence="7">
    <location>
        <begin position="92"/>
        <end position="97"/>
    </location>
</feature>
<feature type="helix" evidence="7">
    <location>
        <begin position="99"/>
        <end position="120"/>
    </location>
</feature>
<feature type="helix" evidence="7">
    <location>
        <begin position="125"/>
        <end position="143"/>
    </location>
</feature>
<protein>
    <recommendedName>
        <fullName evidence="5">HTH-type transcriptional repressor MdtR</fullName>
    </recommendedName>
    <alternativeName>
        <fullName evidence="4">Multidrug transporter regulator</fullName>
    </alternativeName>
</protein>
<sequence length="155" mass="17400">MKSADQLMSDIQLSLQALFQKIQPEMLESMEKQGVTPAQLFVLASLKKHGSLKVSEIAERMEVKPSAVTLMADRLEQKNLIARTHNTKDRRVIDLSLTDEGDIKFEEVLAGRKAIMARYLSFLTEEEMLQAAHITAKLAQAAETDEKQNMKRGNG</sequence>
<gene>
    <name evidence="4" type="primary">mdtR</name>
    <name type="synonym">yusO</name>
    <name type="ordered locus">BSU32870</name>
</gene>
<reference key="1">
    <citation type="journal article" date="1997" name="Nature">
        <title>The complete genome sequence of the Gram-positive bacterium Bacillus subtilis.</title>
        <authorList>
            <person name="Kunst F."/>
            <person name="Ogasawara N."/>
            <person name="Moszer I."/>
            <person name="Albertini A.M."/>
            <person name="Alloni G."/>
            <person name="Azevedo V."/>
            <person name="Bertero M.G."/>
            <person name="Bessieres P."/>
            <person name="Bolotin A."/>
            <person name="Borchert S."/>
            <person name="Borriss R."/>
            <person name="Boursier L."/>
            <person name="Brans A."/>
            <person name="Braun M."/>
            <person name="Brignell S.C."/>
            <person name="Bron S."/>
            <person name="Brouillet S."/>
            <person name="Bruschi C.V."/>
            <person name="Caldwell B."/>
            <person name="Capuano V."/>
            <person name="Carter N.M."/>
            <person name="Choi S.-K."/>
            <person name="Codani J.-J."/>
            <person name="Connerton I.F."/>
            <person name="Cummings N.J."/>
            <person name="Daniel R.A."/>
            <person name="Denizot F."/>
            <person name="Devine K.M."/>
            <person name="Duesterhoeft A."/>
            <person name="Ehrlich S.D."/>
            <person name="Emmerson P.T."/>
            <person name="Entian K.-D."/>
            <person name="Errington J."/>
            <person name="Fabret C."/>
            <person name="Ferrari E."/>
            <person name="Foulger D."/>
            <person name="Fritz C."/>
            <person name="Fujita M."/>
            <person name="Fujita Y."/>
            <person name="Fuma S."/>
            <person name="Galizzi A."/>
            <person name="Galleron N."/>
            <person name="Ghim S.-Y."/>
            <person name="Glaser P."/>
            <person name="Goffeau A."/>
            <person name="Golightly E.J."/>
            <person name="Grandi G."/>
            <person name="Guiseppi G."/>
            <person name="Guy B.J."/>
            <person name="Haga K."/>
            <person name="Haiech J."/>
            <person name="Harwood C.R."/>
            <person name="Henaut A."/>
            <person name="Hilbert H."/>
            <person name="Holsappel S."/>
            <person name="Hosono S."/>
            <person name="Hullo M.-F."/>
            <person name="Itaya M."/>
            <person name="Jones L.-M."/>
            <person name="Joris B."/>
            <person name="Karamata D."/>
            <person name="Kasahara Y."/>
            <person name="Klaerr-Blanchard M."/>
            <person name="Klein C."/>
            <person name="Kobayashi Y."/>
            <person name="Koetter P."/>
            <person name="Koningstein G."/>
            <person name="Krogh S."/>
            <person name="Kumano M."/>
            <person name="Kurita K."/>
            <person name="Lapidus A."/>
            <person name="Lardinois S."/>
            <person name="Lauber J."/>
            <person name="Lazarevic V."/>
            <person name="Lee S.-M."/>
            <person name="Levine A."/>
            <person name="Liu H."/>
            <person name="Masuda S."/>
            <person name="Mauel C."/>
            <person name="Medigue C."/>
            <person name="Medina N."/>
            <person name="Mellado R.P."/>
            <person name="Mizuno M."/>
            <person name="Moestl D."/>
            <person name="Nakai S."/>
            <person name="Noback M."/>
            <person name="Noone D."/>
            <person name="O'Reilly M."/>
            <person name="Ogawa K."/>
            <person name="Ogiwara A."/>
            <person name="Oudega B."/>
            <person name="Park S.-H."/>
            <person name="Parro V."/>
            <person name="Pohl T.M."/>
            <person name="Portetelle D."/>
            <person name="Porwollik S."/>
            <person name="Prescott A.M."/>
            <person name="Presecan E."/>
            <person name="Pujic P."/>
            <person name="Purnelle B."/>
            <person name="Rapoport G."/>
            <person name="Rey M."/>
            <person name="Reynolds S."/>
            <person name="Rieger M."/>
            <person name="Rivolta C."/>
            <person name="Rocha E."/>
            <person name="Roche B."/>
            <person name="Rose M."/>
            <person name="Sadaie Y."/>
            <person name="Sato T."/>
            <person name="Scanlan E."/>
            <person name="Schleich S."/>
            <person name="Schroeter R."/>
            <person name="Scoffone F."/>
            <person name="Sekiguchi J."/>
            <person name="Sekowska A."/>
            <person name="Seror S.J."/>
            <person name="Serror P."/>
            <person name="Shin B.-S."/>
            <person name="Soldo B."/>
            <person name="Sorokin A."/>
            <person name="Tacconi E."/>
            <person name="Takagi T."/>
            <person name="Takahashi H."/>
            <person name="Takemaru K."/>
            <person name="Takeuchi M."/>
            <person name="Tamakoshi A."/>
            <person name="Tanaka T."/>
            <person name="Terpstra P."/>
            <person name="Tognoni A."/>
            <person name="Tosato V."/>
            <person name="Uchiyama S."/>
            <person name="Vandenbol M."/>
            <person name="Vannier F."/>
            <person name="Vassarotti A."/>
            <person name="Viari A."/>
            <person name="Wambutt R."/>
            <person name="Wedler E."/>
            <person name="Wedler H."/>
            <person name="Weitzenegger T."/>
            <person name="Winters P."/>
            <person name="Wipat A."/>
            <person name="Yamamoto H."/>
            <person name="Yamane K."/>
            <person name="Yasumoto K."/>
            <person name="Yata K."/>
            <person name="Yoshida K."/>
            <person name="Yoshikawa H.-F."/>
            <person name="Zumstein E."/>
            <person name="Yoshikawa H."/>
            <person name="Danchin A."/>
        </authorList>
    </citation>
    <scope>NUCLEOTIDE SEQUENCE [LARGE SCALE GENOMIC DNA]</scope>
    <source>
        <strain>168</strain>
    </source>
</reference>
<reference key="2">
    <citation type="journal article" date="2009" name="J. Bacteriol.">
        <title>Identification and characterization of a novel multidrug resistance operon, mdtRP (yusOP), of Bacillus subtilis.</title>
        <authorList>
            <person name="Kim J.Y."/>
            <person name="Inaoka T."/>
            <person name="Hirooka K."/>
            <person name="Matsuoka H."/>
            <person name="Murata M."/>
            <person name="Ohki R."/>
            <person name="Adachi Y."/>
            <person name="Fujita Y."/>
            <person name="Ochi K."/>
        </authorList>
    </citation>
    <scope>FUNCTION</scope>
    <scope>DNA-BINDING</scope>
    <scope>ACTIVITY REGULATION</scope>
    <scope>SUBUNIT</scope>
    <scope>INDUCTION</scope>
    <scope>DISRUPTION PHENOTYPE</scope>
    <scope>MUTAGENESIS OF ALA-67 AND ARG-83</scope>
    <source>
        <strain>168</strain>
    </source>
</reference>
<reference evidence="6" key="3">
    <citation type="submission" date="2004-01" db="PDB data bank">
        <title>X-ray crystal structure of YusO protein from Bacillus subtilis, a member of MarR transcriptional regulator family.</title>
        <authorList>
            <person name="Osipiuk J."/>
            <person name="Wu R."/>
            <person name="Moy S."/>
            <person name="Collart F."/>
            <person name="Joachimiak A."/>
        </authorList>
    </citation>
    <scope>X-RAY CRYSTALLOGRAPHY (2.25 ANGSTROMS)</scope>
    <scope>SUBUNIT</scope>
</reference>
<accession>O32181</accession>
<name>MDTR_BACSU</name>
<organism>
    <name type="scientific">Bacillus subtilis (strain 168)</name>
    <dbReference type="NCBI Taxonomy" id="224308"/>
    <lineage>
        <taxon>Bacteria</taxon>
        <taxon>Bacillati</taxon>
        <taxon>Bacillota</taxon>
        <taxon>Bacilli</taxon>
        <taxon>Bacillales</taxon>
        <taxon>Bacillaceae</taxon>
        <taxon>Bacillus</taxon>
    </lineage>
</organism>
<comment type="function">
    <text evidence="2">Repressor of the multidrug resistance operon mdtRP (PubMed:19286808). Acts by binding directly to the mdtRP promoter region, leading to the repression of its expression (PubMed:19286808).</text>
</comment>
<comment type="activity regulation">
    <text evidence="2">The binding of MdtR to the mdtRP promoter region is severely inhibited by adding excess concentrations of fusidic acid or novobiocin but not by actinomycin or streptomycin.</text>
</comment>
<comment type="subunit">
    <text evidence="2 3">Homodimer.</text>
</comment>
<comment type="subcellular location">
    <subcellularLocation>
        <location evidence="5">Cytoplasm</location>
    </subcellularLocation>
</comment>
<comment type="induction">
    <text evidence="2">Part of the mdtRP (yusOP) operon (PubMed:19286808). Negatively autoregulated (PubMed:19286808). Induced by fusidic acid (PubMed:19286808). The mdtRP expression is decreased during stationary phase, even in mdtR mutants (PubMed:19286808).</text>
</comment>
<comment type="disruption phenotype">
    <text evidence="2">The loss of the gene causes increased expression of mdtRP, low levels resistance to fusidic acid, and resistance to novobiocin, streptomycin and actinomycin.</text>
</comment>